<feature type="signal peptide" evidence="3">
    <location>
        <begin position="1"/>
        <end position="32"/>
    </location>
</feature>
<feature type="chain" id="PRO_0000230800" description="Trehalase">
    <location>
        <begin position="33"/>
        <end position="585"/>
    </location>
</feature>
<feature type="active site" description="Proton donor/acceptor" evidence="1">
    <location>
        <position position="338"/>
    </location>
</feature>
<feature type="active site" description="Proton donor/acceptor" evidence="1">
    <location>
        <position position="535"/>
    </location>
</feature>
<feature type="binding site" evidence="1">
    <location>
        <position position="184"/>
    </location>
    <ligand>
        <name>substrate</name>
    </ligand>
</feature>
<feature type="binding site" evidence="1">
    <location>
        <begin position="191"/>
        <end position="192"/>
    </location>
    <ligand>
        <name>substrate</name>
    </ligand>
</feature>
<feature type="binding site" evidence="1">
    <location>
        <position position="228"/>
    </location>
    <ligand>
        <name>substrate</name>
    </ligand>
</feature>
<feature type="binding site" evidence="1">
    <location>
        <begin position="237"/>
        <end position="239"/>
    </location>
    <ligand>
        <name>substrate</name>
    </ligand>
</feature>
<feature type="binding site" evidence="1">
    <location>
        <begin position="302"/>
        <end position="304"/>
    </location>
    <ligand>
        <name>substrate</name>
    </ligand>
</feature>
<feature type="binding site" evidence="1">
    <location>
        <position position="336"/>
    </location>
    <ligand>
        <name>substrate</name>
    </ligand>
</feature>
<feature type="binding site" evidence="1">
    <location>
        <position position="550"/>
    </location>
    <ligand>
        <name>substrate</name>
    </ligand>
</feature>
<feature type="glycosylation site" description="N-linked (GlcNAc...) asparagine" evidence="2">
    <location>
        <position position="207"/>
    </location>
</feature>
<feature type="glycosylation site" description="N-linked (GlcNAc...) asparagine" evidence="2">
    <location>
        <position position="348"/>
    </location>
</feature>
<protein>
    <recommendedName>
        <fullName>Trehalase</fullName>
        <ecNumber>3.2.1.28</ecNumber>
    </recommendedName>
    <alternativeName>
        <fullName>Alpha,alpha-trehalase</fullName>
    </alternativeName>
    <alternativeName>
        <fullName>Alpha,alpha-trehalose glucohydrolase</fullName>
    </alternativeName>
</protein>
<name>TREA_PIMHY</name>
<dbReference type="EC" id="3.2.1.28"/>
<dbReference type="EMBL" id="AJ459958">
    <property type="protein sequence ID" value="CAD31109.1"/>
    <property type="molecule type" value="mRNA"/>
</dbReference>
<dbReference type="SMR" id="Q8MMG9"/>
<dbReference type="CAZy" id="GH37">
    <property type="family name" value="Glycoside Hydrolase Family 37"/>
</dbReference>
<dbReference type="GlyCosmos" id="Q8MMG9">
    <property type="glycosylation" value="2 sites, No reported glycans"/>
</dbReference>
<dbReference type="GO" id="GO:0005576">
    <property type="term" value="C:extracellular region"/>
    <property type="evidence" value="ECO:0007669"/>
    <property type="project" value="UniProtKB-SubCell"/>
</dbReference>
<dbReference type="GO" id="GO:0004555">
    <property type="term" value="F:alpha,alpha-trehalase activity"/>
    <property type="evidence" value="ECO:0007669"/>
    <property type="project" value="UniProtKB-EC"/>
</dbReference>
<dbReference type="GO" id="GO:0005993">
    <property type="term" value="P:trehalose catabolic process"/>
    <property type="evidence" value="ECO:0007669"/>
    <property type="project" value="TreeGrafter"/>
</dbReference>
<dbReference type="Gene3D" id="1.50.10.10">
    <property type="match status" value="1"/>
</dbReference>
<dbReference type="InterPro" id="IPR008928">
    <property type="entry name" value="6-hairpin_glycosidase_sf"/>
</dbReference>
<dbReference type="InterPro" id="IPR012341">
    <property type="entry name" value="6hp_glycosidase-like_sf"/>
</dbReference>
<dbReference type="InterPro" id="IPR001661">
    <property type="entry name" value="Glyco_hydro_37"/>
</dbReference>
<dbReference type="InterPro" id="IPR018232">
    <property type="entry name" value="Glyco_hydro_37_CS"/>
</dbReference>
<dbReference type="PANTHER" id="PTHR23403">
    <property type="entry name" value="TREHALASE"/>
    <property type="match status" value="1"/>
</dbReference>
<dbReference type="PANTHER" id="PTHR23403:SF1">
    <property type="entry name" value="TREHALASE"/>
    <property type="match status" value="1"/>
</dbReference>
<dbReference type="Pfam" id="PF01204">
    <property type="entry name" value="Trehalase"/>
    <property type="match status" value="1"/>
</dbReference>
<dbReference type="PRINTS" id="PR00744">
    <property type="entry name" value="GLHYDRLASE37"/>
</dbReference>
<dbReference type="SUPFAM" id="SSF48208">
    <property type="entry name" value="Six-hairpin glycosidases"/>
    <property type="match status" value="1"/>
</dbReference>
<dbReference type="PROSITE" id="PS00927">
    <property type="entry name" value="TREHALASE_1"/>
    <property type="match status" value="1"/>
</dbReference>
<dbReference type="PROSITE" id="PS00928">
    <property type="entry name" value="TREHALASE_2"/>
    <property type="match status" value="1"/>
</dbReference>
<sequence>MAKTTPMAKPSVGLLTLQVLVFCALTGSLASAGSIGHVTPRSDLCDSEVYCQGELLKTIQLGEVFKDGKTFVDHYQVNDPSVTVANFRKLMAETGGKPNKDQLTQYVKENFAQENEVIDWSPPDWQENPEFLQRVQDPVFRKWAKDLNDVWKIISRKVAPSVAEHPERHSIISVDNGFIVPGGRFQEFYYWDSYWVMEGLLLTGMKNTSRGILENFLSMVTRFGFIPNGGRVYYLMRSQPPLLIPMVDLYLTHTGDMQFLRDNIGTLEKELGYFLSQKTVDVTKNGKTYKMARYIVSSNGPRPESYREDYELAKNINDEAEKRRFYEDLKAAAESGWDFSSRWYISENGTRGSLSNIATRNIIPVELNAFLQRNARMLAQFHTTLGNPTKAKYYKDIATSYQQAIDDVLWSESEGVWLDFDLRNSQHRNYFFPTNVAPLYTQSFDSSKAQIYGQRAAAYLTRNGILDYMGGTPASLFPTGEQWDLPNAWPPLQSIIVQALRNSNEESAEKLAKELAIRWLRANHKGYSQSGQMFEKYDALNPGKFGGGGEYVVQEGFGWTNGVVYEFLNSYPNATPDDNVHMNNN</sequence>
<accession>Q8MMG9</accession>
<organism>
    <name type="scientific">Pimpla hypochondriaca</name>
    <name type="common">Parasitoid wasp</name>
    <dbReference type="NCBI Taxonomy" id="135724"/>
    <lineage>
        <taxon>Eukaryota</taxon>
        <taxon>Metazoa</taxon>
        <taxon>Ecdysozoa</taxon>
        <taxon>Arthropoda</taxon>
        <taxon>Hexapoda</taxon>
        <taxon>Insecta</taxon>
        <taxon>Pterygota</taxon>
        <taxon>Neoptera</taxon>
        <taxon>Endopterygota</taxon>
        <taxon>Hymenoptera</taxon>
        <taxon>Apocrita</taxon>
        <taxon>Ichneumonoidea</taxon>
        <taxon>Ichneumonidae</taxon>
        <taxon>Pimplinae</taxon>
        <taxon>Pimplini</taxon>
        <taxon>Pimpla</taxon>
    </lineage>
</organism>
<proteinExistence type="evidence at protein level"/>
<evidence type="ECO:0000250" key="1"/>
<evidence type="ECO:0000255" key="2"/>
<evidence type="ECO:0000269" key="3">
    <source>
    </source>
</evidence>
<evidence type="ECO:0000305" key="4"/>
<keyword id="KW-0903">Direct protein sequencing</keyword>
<keyword id="KW-0325">Glycoprotein</keyword>
<keyword id="KW-0326">Glycosidase</keyword>
<keyword id="KW-0378">Hydrolase</keyword>
<keyword id="KW-0964">Secreted</keyword>
<keyword id="KW-0732">Signal</keyword>
<gene>
    <name type="primary">tre1</name>
</gene>
<comment type="catalytic activity">
    <reaction>
        <text>alpha,alpha-trehalose + H2O = alpha-D-glucose + beta-D-glucose</text>
        <dbReference type="Rhea" id="RHEA:32675"/>
        <dbReference type="ChEBI" id="CHEBI:15377"/>
        <dbReference type="ChEBI" id="CHEBI:15903"/>
        <dbReference type="ChEBI" id="CHEBI:16551"/>
        <dbReference type="ChEBI" id="CHEBI:17925"/>
        <dbReference type="EC" id="3.2.1.28"/>
    </reaction>
</comment>
<comment type="subcellular location">
    <subcellularLocation>
        <location>Secreted</location>
    </subcellularLocation>
</comment>
<comment type="tissue specificity">
    <text>Expressed by the venom gland.</text>
</comment>
<comment type="similarity">
    <text evidence="4">Belongs to the glycosyl hydrolase 37 family.</text>
</comment>
<reference key="1">
    <citation type="journal article" date="2003" name="Comp. Biochem. Physiol.">
        <title>cDNAs encoding large venom proteins from the parasitoid wasp Pimpla hypochondriaca identified by random sequence analysis.</title>
        <authorList>
            <person name="Parkinson N.M."/>
            <person name="Conyers C.M."/>
            <person name="Keen J.N."/>
            <person name="MacNicoll A.D."/>
            <person name="Smith I."/>
            <person name="Weaver R.J."/>
        </authorList>
    </citation>
    <scope>NUCLEOTIDE SEQUENCE [MRNA]</scope>
    <scope>PROTEIN SEQUENCE OF 33-38</scope>
    <source>
        <tissue>Venom</tissue>
        <tissue>Venom gland</tissue>
    </source>
</reference>